<feature type="chain" id="PRO_0000139950" description="Ribonuclease PH">
    <location>
        <begin position="1"/>
        <end position="238"/>
    </location>
</feature>
<feature type="binding site" evidence="1">
    <location>
        <position position="86"/>
    </location>
    <ligand>
        <name>phosphate</name>
        <dbReference type="ChEBI" id="CHEBI:43474"/>
        <note>substrate</note>
    </ligand>
</feature>
<feature type="binding site" evidence="1">
    <location>
        <begin position="124"/>
        <end position="126"/>
    </location>
    <ligand>
        <name>phosphate</name>
        <dbReference type="ChEBI" id="CHEBI:43474"/>
        <note>substrate</note>
    </ligand>
</feature>
<accession>Q7MPT3</accession>
<sequence>MRPNDRAADQVRPIKITRNYTAYAEGSVLVEFGNTKVLCNATVEESVPRWLKGQGKGWVTAEYGMLPRATHSRTRREAANGKQGGRTMEIQRLIARSLRAVVDLEAMGEFMITVDCDVIQADGGTRTASISGASVAMADAFQHLVDSGKLKANPMKGHVAAVSVGILGEDVLCDLEYVEDSAADTDMNVVMTEEGKMIEIQGTAEGEPFSHEQLLALLESAKKGISEIVAAQKAALAN</sequence>
<proteinExistence type="inferred from homology"/>
<reference key="1">
    <citation type="journal article" date="2003" name="Genome Res.">
        <title>Comparative genome analysis of Vibrio vulnificus, a marine pathogen.</title>
        <authorList>
            <person name="Chen C.-Y."/>
            <person name="Wu K.-M."/>
            <person name="Chang Y.-C."/>
            <person name="Chang C.-H."/>
            <person name="Tsai H.-C."/>
            <person name="Liao T.-L."/>
            <person name="Liu Y.-M."/>
            <person name="Chen H.-J."/>
            <person name="Shen A.B.-T."/>
            <person name="Li J.-C."/>
            <person name="Su T.-L."/>
            <person name="Shao C.-P."/>
            <person name="Lee C.-T."/>
            <person name="Hor L.-I."/>
            <person name="Tsai S.-F."/>
        </authorList>
    </citation>
    <scope>NUCLEOTIDE SEQUENCE [LARGE SCALE GENOMIC DNA]</scope>
    <source>
        <strain>YJ016</strain>
    </source>
</reference>
<protein>
    <recommendedName>
        <fullName evidence="1">Ribonuclease PH</fullName>
        <shortName evidence="1">RNase PH</shortName>
        <ecNumber evidence="1">2.7.7.56</ecNumber>
    </recommendedName>
    <alternativeName>
        <fullName evidence="1">tRNA nucleotidyltransferase</fullName>
    </alternativeName>
</protein>
<dbReference type="EC" id="2.7.7.56" evidence="1"/>
<dbReference type="EMBL" id="BA000037">
    <property type="protein sequence ID" value="BAC93043.1"/>
    <property type="molecule type" value="Genomic_DNA"/>
</dbReference>
<dbReference type="RefSeq" id="WP_011078901.1">
    <property type="nucleotide sequence ID" value="NC_005139.1"/>
</dbReference>
<dbReference type="SMR" id="Q7MPT3"/>
<dbReference type="STRING" id="672.VV93_v1c02710"/>
<dbReference type="GeneID" id="93895131"/>
<dbReference type="KEGG" id="vvy:VV0279"/>
<dbReference type="eggNOG" id="COG0689">
    <property type="taxonomic scope" value="Bacteria"/>
</dbReference>
<dbReference type="HOGENOM" id="CLU_050858_0_0_6"/>
<dbReference type="Proteomes" id="UP000002675">
    <property type="component" value="Chromosome I"/>
</dbReference>
<dbReference type="GO" id="GO:0000175">
    <property type="term" value="F:3'-5'-RNA exonuclease activity"/>
    <property type="evidence" value="ECO:0007669"/>
    <property type="project" value="UniProtKB-UniRule"/>
</dbReference>
<dbReference type="GO" id="GO:0000049">
    <property type="term" value="F:tRNA binding"/>
    <property type="evidence" value="ECO:0007669"/>
    <property type="project" value="UniProtKB-UniRule"/>
</dbReference>
<dbReference type="GO" id="GO:0009022">
    <property type="term" value="F:tRNA nucleotidyltransferase activity"/>
    <property type="evidence" value="ECO:0007669"/>
    <property type="project" value="UniProtKB-UniRule"/>
</dbReference>
<dbReference type="GO" id="GO:0016075">
    <property type="term" value="P:rRNA catabolic process"/>
    <property type="evidence" value="ECO:0007669"/>
    <property type="project" value="UniProtKB-UniRule"/>
</dbReference>
<dbReference type="GO" id="GO:0006364">
    <property type="term" value="P:rRNA processing"/>
    <property type="evidence" value="ECO:0007669"/>
    <property type="project" value="UniProtKB-KW"/>
</dbReference>
<dbReference type="GO" id="GO:0008033">
    <property type="term" value="P:tRNA processing"/>
    <property type="evidence" value="ECO:0007669"/>
    <property type="project" value="UniProtKB-UniRule"/>
</dbReference>
<dbReference type="CDD" id="cd11362">
    <property type="entry name" value="RNase_PH_bact"/>
    <property type="match status" value="1"/>
</dbReference>
<dbReference type="FunFam" id="3.30.230.70:FF:000003">
    <property type="entry name" value="Ribonuclease PH"/>
    <property type="match status" value="1"/>
</dbReference>
<dbReference type="Gene3D" id="3.30.230.70">
    <property type="entry name" value="GHMP Kinase, N-terminal domain"/>
    <property type="match status" value="1"/>
</dbReference>
<dbReference type="HAMAP" id="MF_00564">
    <property type="entry name" value="RNase_PH"/>
    <property type="match status" value="1"/>
</dbReference>
<dbReference type="InterPro" id="IPR001247">
    <property type="entry name" value="ExoRNase_PH_dom1"/>
</dbReference>
<dbReference type="InterPro" id="IPR015847">
    <property type="entry name" value="ExoRNase_PH_dom2"/>
</dbReference>
<dbReference type="InterPro" id="IPR036345">
    <property type="entry name" value="ExoRNase_PH_dom2_sf"/>
</dbReference>
<dbReference type="InterPro" id="IPR027408">
    <property type="entry name" value="PNPase/RNase_PH_dom_sf"/>
</dbReference>
<dbReference type="InterPro" id="IPR020568">
    <property type="entry name" value="Ribosomal_Su5_D2-typ_SF"/>
</dbReference>
<dbReference type="InterPro" id="IPR050080">
    <property type="entry name" value="RNase_PH"/>
</dbReference>
<dbReference type="InterPro" id="IPR002381">
    <property type="entry name" value="RNase_PH_bac-type"/>
</dbReference>
<dbReference type="InterPro" id="IPR018336">
    <property type="entry name" value="RNase_PH_CS"/>
</dbReference>
<dbReference type="NCBIfam" id="TIGR01966">
    <property type="entry name" value="RNasePH"/>
    <property type="match status" value="1"/>
</dbReference>
<dbReference type="PANTHER" id="PTHR11953">
    <property type="entry name" value="EXOSOME COMPLEX COMPONENT"/>
    <property type="match status" value="1"/>
</dbReference>
<dbReference type="PANTHER" id="PTHR11953:SF0">
    <property type="entry name" value="EXOSOME COMPLEX COMPONENT RRP41"/>
    <property type="match status" value="1"/>
</dbReference>
<dbReference type="Pfam" id="PF01138">
    <property type="entry name" value="RNase_PH"/>
    <property type="match status" value="1"/>
</dbReference>
<dbReference type="Pfam" id="PF03725">
    <property type="entry name" value="RNase_PH_C"/>
    <property type="match status" value="1"/>
</dbReference>
<dbReference type="SUPFAM" id="SSF55666">
    <property type="entry name" value="Ribonuclease PH domain 2-like"/>
    <property type="match status" value="1"/>
</dbReference>
<dbReference type="SUPFAM" id="SSF54211">
    <property type="entry name" value="Ribosomal protein S5 domain 2-like"/>
    <property type="match status" value="1"/>
</dbReference>
<dbReference type="PROSITE" id="PS01277">
    <property type="entry name" value="RIBONUCLEASE_PH"/>
    <property type="match status" value="1"/>
</dbReference>
<comment type="function">
    <text evidence="1">Phosphorolytic 3'-5' exoribonuclease that plays an important role in tRNA 3'-end maturation. Removes nucleotide residues following the 3'-CCA terminus of tRNAs; can also add nucleotides to the ends of RNA molecules by using nucleoside diphosphates as substrates, but this may not be physiologically important. Probably plays a role in initiation of 16S rRNA degradation (leading to ribosome degradation) during starvation.</text>
</comment>
<comment type="catalytic activity">
    <reaction evidence="1">
        <text>tRNA(n+1) + phosphate = tRNA(n) + a ribonucleoside 5'-diphosphate</text>
        <dbReference type="Rhea" id="RHEA:10628"/>
        <dbReference type="Rhea" id="RHEA-COMP:17343"/>
        <dbReference type="Rhea" id="RHEA-COMP:17344"/>
        <dbReference type="ChEBI" id="CHEBI:43474"/>
        <dbReference type="ChEBI" id="CHEBI:57930"/>
        <dbReference type="ChEBI" id="CHEBI:173114"/>
        <dbReference type="EC" id="2.7.7.56"/>
    </reaction>
</comment>
<comment type="subunit">
    <text evidence="1">Homohexameric ring arranged as a trimer of dimers.</text>
</comment>
<comment type="similarity">
    <text evidence="1">Belongs to the RNase PH family.</text>
</comment>
<name>RNPH_VIBVY</name>
<gene>
    <name evidence="1" type="primary">rph</name>
    <name type="ordered locus">VV0279</name>
</gene>
<organism>
    <name type="scientific">Vibrio vulnificus (strain YJ016)</name>
    <dbReference type="NCBI Taxonomy" id="196600"/>
    <lineage>
        <taxon>Bacteria</taxon>
        <taxon>Pseudomonadati</taxon>
        <taxon>Pseudomonadota</taxon>
        <taxon>Gammaproteobacteria</taxon>
        <taxon>Vibrionales</taxon>
        <taxon>Vibrionaceae</taxon>
        <taxon>Vibrio</taxon>
    </lineage>
</organism>
<evidence type="ECO:0000255" key="1">
    <source>
        <dbReference type="HAMAP-Rule" id="MF_00564"/>
    </source>
</evidence>
<keyword id="KW-0548">Nucleotidyltransferase</keyword>
<keyword id="KW-0694">RNA-binding</keyword>
<keyword id="KW-0698">rRNA processing</keyword>
<keyword id="KW-0808">Transferase</keyword>
<keyword id="KW-0819">tRNA processing</keyword>
<keyword id="KW-0820">tRNA-binding</keyword>